<proteinExistence type="inferred from homology"/>
<feature type="chain" id="PRO_1000048828" description="tRNA modification GTPase MnmE">
    <location>
        <begin position="1"/>
        <end position="462"/>
    </location>
</feature>
<feature type="domain" description="TrmE-type G">
    <location>
        <begin position="224"/>
        <end position="383"/>
    </location>
</feature>
<feature type="binding site" evidence="1">
    <location>
        <position position="23"/>
    </location>
    <ligand>
        <name>(6S)-5-formyl-5,6,7,8-tetrahydrofolate</name>
        <dbReference type="ChEBI" id="CHEBI:57457"/>
    </ligand>
</feature>
<feature type="binding site" evidence="1">
    <location>
        <position position="88"/>
    </location>
    <ligand>
        <name>(6S)-5-formyl-5,6,7,8-tetrahydrofolate</name>
        <dbReference type="ChEBI" id="CHEBI:57457"/>
    </ligand>
</feature>
<feature type="binding site" evidence="1">
    <location>
        <position position="127"/>
    </location>
    <ligand>
        <name>(6S)-5-formyl-5,6,7,8-tetrahydrofolate</name>
        <dbReference type="ChEBI" id="CHEBI:57457"/>
    </ligand>
</feature>
<feature type="binding site" evidence="1">
    <location>
        <begin position="234"/>
        <end position="239"/>
    </location>
    <ligand>
        <name>GTP</name>
        <dbReference type="ChEBI" id="CHEBI:37565"/>
    </ligand>
</feature>
<feature type="binding site" evidence="1">
    <location>
        <position position="234"/>
    </location>
    <ligand>
        <name>K(+)</name>
        <dbReference type="ChEBI" id="CHEBI:29103"/>
    </ligand>
</feature>
<feature type="binding site" evidence="1">
    <location>
        <position position="238"/>
    </location>
    <ligand>
        <name>Mg(2+)</name>
        <dbReference type="ChEBI" id="CHEBI:18420"/>
    </ligand>
</feature>
<feature type="binding site" evidence="1">
    <location>
        <begin position="253"/>
        <end position="259"/>
    </location>
    <ligand>
        <name>GTP</name>
        <dbReference type="ChEBI" id="CHEBI:37565"/>
    </ligand>
</feature>
<feature type="binding site" evidence="1">
    <location>
        <position position="253"/>
    </location>
    <ligand>
        <name>K(+)</name>
        <dbReference type="ChEBI" id="CHEBI:29103"/>
    </ligand>
</feature>
<feature type="binding site" evidence="1">
    <location>
        <position position="255"/>
    </location>
    <ligand>
        <name>K(+)</name>
        <dbReference type="ChEBI" id="CHEBI:29103"/>
    </ligand>
</feature>
<feature type="binding site" evidence="1">
    <location>
        <position position="258"/>
    </location>
    <ligand>
        <name>K(+)</name>
        <dbReference type="ChEBI" id="CHEBI:29103"/>
    </ligand>
</feature>
<feature type="binding site" evidence="1">
    <location>
        <position position="259"/>
    </location>
    <ligand>
        <name>Mg(2+)</name>
        <dbReference type="ChEBI" id="CHEBI:18420"/>
    </ligand>
</feature>
<feature type="binding site" evidence="1">
    <location>
        <begin position="278"/>
        <end position="281"/>
    </location>
    <ligand>
        <name>GTP</name>
        <dbReference type="ChEBI" id="CHEBI:37565"/>
    </ligand>
</feature>
<feature type="binding site" evidence="1">
    <location>
        <position position="462"/>
    </location>
    <ligand>
        <name>(6S)-5-formyl-5,6,7,8-tetrahydrofolate</name>
        <dbReference type="ChEBI" id="CHEBI:57457"/>
    </ligand>
</feature>
<comment type="function">
    <text evidence="1">Exhibits a very high intrinsic GTPase hydrolysis rate. Involved in the addition of a carboxymethylaminomethyl (cmnm) group at the wobble position (U34) of certain tRNAs, forming tRNA-cmnm(5)s(2)U34.</text>
</comment>
<comment type="cofactor">
    <cofactor evidence="1">
        <name>K(+)</name>
        <dbReference type="ChEBI" id="CHEBI:29103"/>
    </cofactor>
    <text evidence="1">Binds 1 potassium ion per subunit.</text>
</comment>
<comment type="subunit">
    <text evidence="1">Homodimer. Heterotetramer of two MnmE and two MnmG subunits.</text>
</comment>
<comment type="subcellular location">
    <subcellularLocation>
        <location evidence="1">Cytoplasm</location>
    </subcellularLocation>
</comment>
<comment type="similarity">
    <text evidence="1">Belongs to the TRAFAC class TrmE-Era-EngA-EngB-Septin-like GTPase superfamily. TrmE GTPase family.</text>
</comment>
<evidence type="ECO:0000255" key="1">
    <source>
        <dbReference type="HAMAP-Rule" id="MF_00379"/>
    </source>
</evidence>
<keyword id="KW-0963">Cytoplasm</keyword>
<keyword id="KW-0342">GTP-binding</keyword>
<keyword id="KW-0378">Hydrolase</keyword>
<keyword id="KW-0460">Magnesium</keyword>
<keyword id="KW-0479">Metal-binding</keyword>
<keyword id="KW-0547">Nucleotide-binding</keyword>
<keyword id="KW-0630">Potassium</keyword>
<keyword id="KW-1185">Reference proteome</keyword>
<keyword id="KW-0819">tRNA processing</keyword>
<organism>
    <name type="scientific">Geobacillus kaustophilus (strain HTA426)</name>
    <dbReference type="NCBI Taxonomy" id="235909"/>
    <lineage>
        <taxon>Bacteria</taxon>
        <taxon>Bacillati</taxon>
        <taxon>Bacillota</taxon>
        <taxon>Bacilli</taxon>
        <taxon>Bacillales</taxon>
        <taxon>Anoxybacillaceae</taxon>
        <taxon>Geobacillus</taxon>
        <taxon>Geobacillus thermoleovorans group</taxon>
    </lineage>
</organism>
<reference key="1">
    <citation type="journal article" date="2004" name="Nucleic Acids Res.">
        <title>Thermoadaptation trait revealed by the genome sequence of thermophilic Geobacillus kaustophilus.</title>
        <authorList>
            <person name="Takami H."/>
            <person name="Takaki Y."/>
            <person name="Chee G.-J."/>
            <person name="Nishi S."/>
            <person name="Shimamura S."/>
            <person name="Suzuki H."/>
            <person name="Matsui S."/>
            <person name="Uchiyama I."/>
        </authorList>
    </citation>
    <scope>NUCLEOTIDE SEQUENCE [LARGE SCALE GENOMIC DNA]</scope>
    <source>
        <strain>HTA426</strain>
    </source>
</reference>
<gene>
    <name evidence="1" type="primary">mnmE</name>
    <name evidence="1" type="synonym">trmE</name>
    <name type="ordered locus">GK3494</name>
</gene>
<sequence length="462" mass="51254">MTEFDTIAAISTPMGEGAIAIVRLSGDQAVEIADRLFRSPSGKRLKDVPSHTIHYGHIIDPKSGRVVEEVMVSVMRAPKTFTREDVVEINCHGGFVSVNRVLQLVLANGARLAEPGEFTKRAFLNGRIDLSQAEAVIDLIRAKTDRAMNVALQQMEGRLSKLIRELRQTILETLAHVEVNIDYPEYDDVEEMTPRLLREKAEYVRGQIEKLLSTAAQGKILREGLATVIIGRPNVGKSSLLNALAHENRAIVTDIPGTTRDVIEEYVNVRGVPLRLIDTAGIRETEDVVERIGVERSQQMLKRADLILLVLNYHEPLTEEDERLFAMIEGMDAIVIVNKTDLPRRIDMERVKELAAGRPVVGTSLLHEQGIDELEKAIADLFFGGELEAGDLTYVSNSRHIALLEQAKTAIEDALAGIDAGMPVDLVQIDLRRAWELLGEIIGDTVHESLIDQLFAQFCLGK</sequence>
<protein>
    <recommendedName>
        <fullName evidence="1">tRNA modification GTPase MnmE</fullName>
        <ecNumber evidence="1">3.6.-.-</ecNumber>
    </recommendedName>
</protein>
<name>MNME_GEOKA</name>
<dbReference type="EC" id="3.6.-.-" evidence="1"/>
<dbReference type="EMBL" id="BA000043">
    <property type="protein sequence ID" value="BAD77779.1"/>
    <property type="molecule type" value="Genomic_DNA"/>
</dbReference>
<dbReference type="RefSeq" id="WP_011232957.1">
    <property type="nucleotide sequence ID" value="NC_006510.1"/>
</dbReference>
<dbReference type="SMR" id="Q5KU57"/>
<dbReference type="STRING" id="235909.GK3494"/>
<dbReference type="GeneID" id="32065371"/>
<dbReference type="KEGG" id="gka:GK3494"/>
<dbReference type="eggNOG" id="COG0486">
    <property type="taxonomic scope" value="Bacteria"/>
</dbReference>
<dbReference type="HOGENOM" id="CLU_019624_4_1_9"/>
<dbReference type="Proteomes" id="UP000001172">
    <property type="component" value="Chromosome"/>
</dbReference>
<dbReference type="GO" id="GO:0005829">
    <property type="term" value="C:cytosol"/>
    <property type="evidence" value="ECO:0007669"/>
    <property type="project" value="TreeGrafter"/>
</dbReference>
<dbReference type="GO" id="GO:0005525">
    <property type="term" value="F:GTP binding"/>
    <property type="evidence" value="ECO:0007669"/>
    <property type="project" value="UniProtKB-UniRule"/>
</dbReference>
<dbReference type="GO" id="GO:0003924">
    <property type="term" value="F:GTPase activity"/>
    <property type="evidence" value="ECO:0007669"/>
    <property type="project" value="UniProtKB-UniRule"/>
</dbReference>
<dbReference type="GO" id="GO:0046872">
    <property type="term" value="F:metal ion binding"/>
    <property type="evidence" value="ECO:0007669"/>
    <property type="project" value="UniProtKB-KW"/>
</dbReference>
<dbReference type="GO" id="GO:0030488">
    <property type="term" value="P:tRNA methylation"/>
    <property type="evidence" value="ECO:0007669"/>
    <property type="project" value="TreeGrafter"/>
</dbReference>
<dbReference type="GO" id="GO:0002098">
    <property type="term" value="P:tRNA wobble uridine modification"/>
    <property type="evidence" value="ECO:0007669"/>
    <property type="project" value="TreeGrafter"/>
</dbReference>
<dbReference type="CDD" id="cd04164">
    <property type="entry name" value="trmE"/>
    <property type="match status" value="1"/>
</dbReference>
<dbReference type="CDD" id="cd14858">
    <property type="entry name" value="TrmE_N"/>
    <property type="match status" value="1"/>
</dbReference>
<dbReference type="FunFam" id="3.30.1360.120:FF:000003">
    <property type="entry name" value="tRNA modification GTPase MnmE"/>
    <property type="match status" value="1"/>
</dbReference>
<dbReference type="FunFam" id="3.40.50.300:FF:000494">
    <property type="entry name" value="tRNA modification GTPase MnmE"/>
    <property type="match status" value="1"/>
</dbReference>
<dbReference type="Gene3D" id="3.40.50.300">
    <property type="entry name" value="P-loop containing nucleotide triphosphate hydrolases"/>
    <property type="match status" value="1"/>
</dbReference>
<dbReference type="Gene3D" id="3.30.1360.120">
    <property type="entry name" value="Probable tRNA modification gtpase trme, domain 1"/>
    <property type="match status" value="1"/>
</dbReference>
<dbReference type="Gene3D" id="1.20.120.430">
    <property type="entry name" value="tRNA modification GTPase MnmE domain 2"/>
    <property type="match status" value="1"/>
</dbReference>
<dbReference type="HAMAP" id="MF_00379">
    <property type="entry name" value="GTPase_MnmE"/>
    <property type="match status" value="1"/>
</dbReference>
<dbReference type="InterPro" id="IPR031168">
    <property type="entry name" value="G_TrmE"/>
</dbReference>
<dbReference type="InterPro" id="IPR006073">
    <property type="entry name" value="GTP-bd"/>
</dbReference>
<dbReference type="InterPro" id="IPR018948">
    <property type="entry name" value="GTP-bd_TrmE_N"/>
</dbReference>
<dbReference type="InterPro" id="IPR004520">
    <property type="entry name" value="GTPase_MnmE"/>
</dbReference>
<dbReference type="InterPro" id="IPR027368">
    <property type="entry name" value="MnmE_dom2"/>
</dbReference>
<dbReference type="InterPro" id="IPR025867">
    <property type="entry name" value="MnmE_helical"/>
</dbReference>
<dbReference type="InterPro" id="IPR027417">
    <property type="entry name" value="P-loop_NTPase"/>
</dbReference>
<dbReference type="InterPro" id="IPR005225">
    <property type="entry name" value="Small_GTP-bd"/>
</dbReference>
<dbReference type="InterPro" id="IPR027266">
    <property type="entry name" value="TrmE/GcvT_dom1"/>
</dbReference>
<dbReference type="NCBIfam" id="TIGR00450">
    <property type="entry name" value="mnmE_trmE_thdF"/>
    <property type="match status" value="1"/>
</dbReference>
<dbReference type="NCBIfam" id="NF003661">
    <property type="entry name" value="PRK05291.1-3"/>
    <property type="match status" value="1"/>
</dbReference>
<dbReference type="NCBIfam" id="TIGR00231">
    <property type="entry name" value="small_GTP"/>
    <property type="match status" value="1"/>
</dbReference>
<dbReference type="PANTHER" id="PTHR42714">
    <property type="entry name" value="TRNA MODIFICATION GTPASE GTPBP3"/>
    <property type="match status" value="1"/>
</dbReference>
<dbReference type="PANTHER" id="PTHR42714:SF2">
    <property type="entry name" value="TRNA MODIFICATION GTPASE GTPBP3, MITOCHONDRIAL"/>
    <property type="match status" value="1"/>
</dbReference>
<dbReference type="Pfam" id="PF01926">
    <property type="entry name" value="MMR_HSR1"/>
    <property type="match status" value="1"/>
</dbReference>
<dbReference type="Pfam" id="PF12631">
    <property type="entry name" value="MnmE_helical"/>
    <property type="match status" value="1"/>
</dbReference>
<dbReference type="Pfam" id="PF10396">
    <property type="entry name" value="TrmE_N"/>
    <property type="match status" value="1"/>
</dbReference>
<dbReference type="PRINTS" id="PR00449">
    <property type="entry name" value="RASTRNSFRMNG"/>
</dbReference>
<dbReference type="SUPFAM" id="SSF52540">
    <property type="entry name" value="P-loop containing nucleoside triphosphate hydrolases"/>
    <property type="match status" value="1"/>
</dbReference>
<dbReference type="SUPFAM" id="SSF116878">
    <property type="entry name" value="TrmE connector domain"/>
    <property type="match status" value="1"/>
</dbReference>
<dbReference type="PROSITE" id="PS51709">
    <property type="entry name" value="G_TRME"/>
    <property type="match status" value="1"/>
</dbReference>
<accession>Q5KU57</accession>